<protein>
    <recommendedName>
        <fullName>Glucose-1-phosphate adenylyltransferase small subunit, chloroplastic/amyloplastic</fullName>
        <ecNumber>2.7.7.27</ecNumber>
    </recommendedName>
    <alternativeName>
        <fullName>ADP-glucose pyrophosphorylase</fullName>
    </alternativeName>
    <alternativeName>
        <fullName>ADP-glucose synthase</fullName>
    </alternativeName>
    <alternativeName>
        <fullName>AGPase B</fullName>
    </alternativeName>
    <alternativeName>
        <fullName>Alpha-D-glucose-1-phosphate adenyl transferase</fullName>
    </alternativeName>
</protein>
<evidence type="ECO:0000250" key="1"/>
<evidence type="ECO:0000305" key="2"/>
<proteinExistence type="evidence at transcript level"/>
<name>GLGS_BETVU</name>
<accession>P55232</accession>
<keyword id="KW-0021">Allosteric enzyme</keyword>
<keyword id="KW-0035">Amyloplast</keyword>
<keyword id="KW-0067">ATP-binding</keyword>
<keyword id="KW-0150">Chloroplast</keyword>
<keyword id="KW-0547">Nucleotide-binding</keyword>
<keyword id="KW-0548">Nucleotidyltransferase</keyword>
<keyword id="KW-0934">Plastid</keyword>
<keyword id="KW-0750">Starch biosynthesis</keyword>
<keyword id="KW-0808">Transferase</keyword>
<keyword id="KW-0809">Transit peptide</keyword>
<dbReference type="EC" id="2.7.7.27"/>
<dbReference type="EMBL" id="X78899">
    <property type="protein sequence ID" value="CAA55515.1"/>
    <property type="molecule type" value="mRNA"/>
</dbReference>
<dbReference type="PIR" id="S51943">
    <property type="entry name" value="S51943"/>
</dbReference>
<dbReference type="SMR" id="P55232"/>
<dbReference type="BRENDA" id="2.7.7.27">
    <property type="organism ID" value="836"/>
</dbReference>
<dbReference type="UniPathway" id="UPA00152"/>
<dbReference type="GO" id="GO:0009501">
    <property type="term" value="C:amyloplast"/>
    <property type="evidence" value="ECO:0007669"/>
    <property type="project" value="UniProtKB-SubCell"/>
</dbReference>
<dbReference type="GO" id="GO:0009507">
    <property type="term" value="C:chloroplast"/>
    <property type="evidence" value="ECO:0007669"/>
    <property type="project" value="UniProtKB-SubCell"/>
</dbReference>
<dbReference type="GO" id="GO:0005524">
    <property type="term" value="F:ATP binding"/>
    <property type="evidence" value="ECO:0007669"/>
    <property type="project" value="UniProtKB-KW"/>
</dbReference>
<dbReference type="GO" id="GO:0008878">
    <property type="term" value="F:glucose-1-phosphate adenylyltransferase activity"/>
    <property type="evidence" value="ECO:0007669"/>
    <property type="project" value="UniProtKB-EC"/>
</dbReference>
<dbReference type="GO" id="GO:0005978">
    <property type="term" value="P:glycogen biosynthetic process"/>
    <property type="evidence" value="ECO:0007669"/>
    <property type="project" value="InterPro"/>
</dbReference>
<dbReference type="GO" id="GO:0019252">
    <property type="term" value="P:starch biosynthetic process"/>
    <property type="evidence" value="ECO:0007669"/>
    <property type="project" value="UniProtKB-UniPathway"/>
</dbReference>
<dbReference type="CDD" id="cd02508">
    <property type="entry name" value="ADP_Glucose_PP"/>
    <property type="match status" value="1"/>
</dbReference>
<dbReference type="CDD" id="cd04651">
    <property type="entry name" value="LbH_G1P_AT_C"/>
    <property type="match status" value="1"/>
</dbReference>
<dbReference type="FunFam" id="3.90.550.10:FF:000030">
    <property type="entry name" value="Glucose-1-phosphate adenylyltransferase"/>
    <property type="match status" value="1"/>
</dbReference>
<dbReference type="Gene3D" id="2.160.10.10">
    <property type="entry name" value="Hexapeptide repeat proteins"/>
    <property type="match status" value="1"/>
</dbReference>
<dbReference type="Gene3D" id="3.90.550.10">
    <property type="entry name" value="Spore Coat Polysaccharide Biosynthesis Protein SpsA, Chain A"/>
    <property type="match status" value="1"/>
</dbReference>
<dbReference type="InterPro" id="IPR011831">
    <property type="entry name" value="ADP-Glc_PPase"/>
</dbReference>
<dbReference type="InterPro" id="IPR005836">
    <property type="entry name" value="ADP_Glu_pyroP_CS"/>
</dbReference>
<dbReference type="InterPro" id="IPR005835">
    <property type="entry name" value="NTP_transferase_dom"/>
</dbReference>
<dbReference type="InterPro" id="IPR029044">
    <property type="entry name" value="Nucleotide-diphossugar_trans"/>
</dbReference>
<dbReference type="InterPro" id="IPR011004">
    <property type="entry name" value="Trimer_LpxA-like_sf"/>
</dbReference>
<dbReference type="NCBIfam" id="TIGR02091">
    <property type="entry name" value="glgC"/>
    <property type="match status" value="1"/>
</dbReference>
<dbReference type="NCBIfam" id="NF002772">
    <property type="entry name" value="PRK02862.1"/>
    <property type="match status" value="1"/>
</dbReference>
<dbReference type="PANTHER" id="PTHR43523:SF12">
    <property type="entry name" value="GLUCOSE-1-PHOSPHATE ADENYLYLTRANSFERASE LARGE SUBUNIT 1, CHLOROPLASTIC-RELATED"/>
    <property type="match status" value="1"/>
</dbReference>
<dbReference type="PANTHER" id="PTHR43523">
    <property type="entry name" value="GLUCOSE-1-PHOSPHATE ADENYLYLTRANSFERASE-RELATED"/>
    <property type="match status" value="1"/>
</dbReference>
<dbReference type="Pfam" id="PF25247">
    <property type="entry name" value="LbH_GLGC"/>
    <property type="match status" value="1"/>
</dbReference>
<dbReference type="Pfam" id="PF00483">
    <property type="entry name" value="NTP_transferase"/>
    <property type="match status" value="1"/>
</dbReference>
<dbReference type="SUPFAM" id="SSF53448">
    <property type="entry name" value="Nucleotide-diphospho-sugar transferases"/>
    <property type="match status" value="1"/>
</dbReference>
<dbReference type="SUPFAM" id="SSF51161">
    <property type="entry name" value="Trimeric LpxA-like enzymes"/>
    <property type="match status" value="1"/>
</dbReference>
<dbReference type="PROSITE" id="PS00808">
    <property type="entry name" value="ADP_GLC_PYROPHOSPH_1"/>
    <property type="match status" value="1"/>
</dbReference>
<dbReference type="PROSITE" id="PS00809">
    <property type="entry name" value="ADP_GLC_PYROPHOSPH_2"/>
    <property type="match status" value="1"/>
</dbReference>
<dbReference type="PROSITE" id="PS00810">
    <property type="entry name" value="ADP_GLC_PYROPHOSPH_3"/>
    <property type="match status" value="1"/>
</dbReference>
<comment type="function">
    <text>This protein plays a role in synthesis of starch. It catalyzes the synthesis of the activated glycosyl donor, ADP-glucose from Glc-1-P and ATP.</text>
</comment>
<comment type="catalytic activity">
    <reaction>
        <text>alpha-D-glucose 1-phosphate + ATP + H(+) = ADP-alpha-D-glucose + diphosphate</text>
        <dbReference type="Rhea" id="RHEA:12120"/>
        <dbReference type="ChEBI" id="CHEBI:15378"/>
        <dbReference type="ChEBI" id="CHEBI:30616"/>
        <dbReference type="ChEBI" id="CHEBI:33019"/>
        <dbReference type="ChEBI" id="CHEBI:57498"/>
        <dbReference type="ChEBI" id="CHEBI:58601"/>
        <dbReference type="EC" id="2.7.7.27"/>
    </reaction>
</comment>
<comment type="activity regulation">
    <text>Activated by 3'phosphoglycerate, inhibited by orthophosphate. Allosteric regulation.</text>
</comment>
<comment type="pathway">
    <text>Glycan biosynthesis; starch biosynthesis.</text>
</comment>
<comment type="subunit">
    <text>Heterotetramer.</text>
</comment>
<comment type="subcellular location">
    <subcellularLocation>
        <location>Plastid</location>
        <location>Chloroplast</location>
    </subcellularLocation>
    <subcellularLocation>
        <location>Plastid</location>
        <location>Amyloplast</location>
    </subcellularLocation>
    <text>Found in the chloroplast in leaf. Found in the plastid in the developing endosperm.</text>
</comment>
<comment type="tissue specificity">
    <text>Prominently expressed in the leaves. A lower level expression is seen in the roots.</text>
</comment>
<comment type="similarity">
    <text evidence="2">Belongs to the bacterial/plant glucose-1-phosphate adenylyltransferase family.</text>
</comment>
<sequence length="489" mass="53796">ITVPSTSSKNLQNSLAFSSSSLSGDKIQTTSFLNRRYCRISSRAPIVVSPKAVSDSKNSQTCLDPEASRSVLGIILGGGAGTRLYPLTKKRAKPAVPLGANYRLIDIPVSNCLNSNISKIYVLTQFNSASLNRHLSRAYASNMGGYKNEGFVEVLAAQQSPENPNWFQGTADAVRQYLWLFEEHNVLEYLILAGDHLYRMDYERFVQAHRETDADITVAALPMDEKRATAFGLMKIDEEGRIIEFAEKPKGEQLKAMKVDTTILGLDDERAKEMPFIASMGIYVISKDVMLNLLREQFPGANDFGSEVIPGATSIGLRVQAYLYDGYWEDIGTIEAFYNANLGITKKPVPDFSFYDRSSPIYTQPRYLPPSKMLDADITDSVIGEGCVIKNCKIHHSVIGLRSCISEGAIIEDTLLMGADYYETDADRKFLAAKGSVPIGIGNARIGDDVKIINSDNVQEAARETDGYFIKSGIVTIIKDAMIPSGTVI</sequence>
<gene>
    <name type="primary">AGPB1</name>
</gene>
<feature type="transit peptide" description="Chloroplast" evidence="1">
    <location>
        <begin position="1" status="less than"/>
        <end position="52"/>
    </location>
</feature>
<feature type="chain" id="PRO_0000011150" description="Glucose-1-phosphate adenylyltransferase small subunit, chloroplastic/amyloplastic">
    <location>
        <begin position="53"/>
        <end position="489"/>
    </location>
</feature>
<feature type="non-terminal residue">
    <location>
        <position position="1"/>
    </location>
</feature>
<organism>
    <name type="scientific">Beta vulgaris</name>
    <name type="common">Sugar beet</name>
    <dbReference type="NCBI Taxonomy" id="161934"/>
    <lineage>
        <taxon>Eukaryota</taxon>
        <taxon>Viridiplantae</taxon>
        <taxon>Streptophyta</taxon>
        <taxon>Embryophyta</taxon>
        <taxon>Tracheophyta</taxon>
        <taxon>Spermatophyta</taxon>
        <taxon>Magnoliopsida</taxon>
        <taxon>eudicotyledons</taxon>
        <taxon>Gunneridae</taxon>
        <taxon>Pentapetalae</taxon>
        <taxon>Caryophyllales</taxon>
        <taxon>Chenopodiaceae</taxon>
        <taxon>Betoideae</taxon>
        <taxon>Beta</taxon>
    </lineage>
</organism>
<reference key="1">
    <citation type="journal article" date="1995" name="Plant Mol. Biol.">
        <title>Isolation and expression analysis of cDNA clones encoding a small and a large subunit of ADP-glucose pyrophosphorylase from sugar beet.</title>
        <authorList>
            <person name="Mueller-Roeber B."/>
            <person name="Nast G."/>
            <person name="Willmitzer L."/>
        </authorList>
    </citation>
    <scope>NUCLEOTIDE SEQUENCE [MRNA]</scope>
    <source>
        <strain>cv. Zuchtlinie 5S0026</strain>
        <tissue>Tap root</tissue>
    </source>
</reference>